<keyword id="KW-0436">Ligase</keyword>
<keyword id="KW-0597">Phosphoprotein</keyword>
<keyword id="KW-0662">Pyridine nucleotide biosynthesis</keyword>
<reference key="1">
    <citation type="submission" date="2007-04" db="EMBL/GenBank/DDBJ databases">
        <title>Complete sequence of Pseudomonas mendocina ymp.</title>
        <authorList>
            <consortium name="US DOE Joint Genome Institute"/>
            <person name="Copeland A."/>
            <person name="Lucas S."/>
            <person name="Lapidus A."/>
            <person name="Barry K."/>
            <person name="Glavina del Rio T."/>
            <person name="Dalin E."/>
            <person name="Tice H."/>
            <person name="Pitluck S."/>
            <person name="Kiss H."/>
            <person name="Brettin T."/>
            <person name="Detter J.C."/>
            <person name="Bruce D."/>
            <person name="Han C."/>
            <person name="Schmutz J."/>
            <person name="Larimer F."/>
            <person name="Land M."/>
            <person name="Hauser L."/>
            <person name="Kyrpides N."/>
            <person name="Mikhailova N."/>
            <person name="Hersman L."/>
            <person name="Dubois J."/>
            <person name="Maurice P."/>
            <person name="Richardson P."/>
        </authorList>
    </citation>
    <scope>NUCLEOTIDE SEQUENCE [LARGE SCALE GENOMIC DNA]</scope>
    <source>
        <strain>ymp</strain>
    </source>
</reference>
<accession>A4XS60</accession>
<evidence type="ECO:0000255" key="1">
    <source>
        <dbReference type="HAMAP-Rule" id="MF_00570"/>
    </source>
</evidence>
<name>PNCB_ECTM1</name>
<organism>
    <name type="scientific">Ectopseudomonas mendocina (strain ymp)</name>
    <name type="common">Pseudomonas mendocina</name>
    <dbReference type="NCBI Taxonomy" id="399739"/>
    <lineage>
        <taxon>Bacteria</taxon>
        <taxon>Pseudomonadati</taxon>
        <taxon>Pseudomonadota</taxon>
        <taxon>Gammaproteobacteria</taxon>
        <taxon>Pseudomonadales</taxon>
        <taxon>Pseudomonadaceae</taxon>
        <taxon>Ectopseudomonas</taxon>
    </lineage>
</organism>
<feature type="chain" id="PRO_1000025005" description="Nicotinate phosphoribosyltransferase">
    <location>
        <begin position="1"/>
        <end position="399"/>
    </location>
</feature>
<feature type="modified residue" description="Phosphohistidine; by autocatalysis" evidence="1">
    <location>
        <position position="224"/>
    </location>
</feature>
<protein>
    <recommendedName>
        <fullName evidence="1">Nicotinate phosphoribosyltransferase</fullName>
        <shortName evidence="1">NAPRTase</shortName>
        <ecNumber evidence="1">6.3.4.21</ecNumber>
    </recommendedName>
</protein>
<dbReference type="EC" id="6.3.4.21" evidence="1"/>
<dbReference type="EMBL" id="CP000680">
    <property type="protein sequence ID" value="ABP84176.1"/>
    <property type="molecule type" value="Genomic_DNA"/>
</dbReference>
<dbReference type="SMR" id="A4XS60"/>
<dbReference type="STRING" id="399739.Pmen_1411"/>
<dbReference type="KEGG" id="pmy:Pmen_1411"/>
<dbReference type="PATRIC" id="fig|399739.8.peg.1432"/>
<dbReference type="eggNOG" id="COG1488">
    <property type="taxonomic scope" value="Bacteria"/>
</dbReference>
<dbReference type="HOGENOM" id="CLU_030991_1_0_6"/>
<dbReference type="OrthoDB" id="9771406at2"/>
<dbReference type="UniPathway" id="UPA00253">
    <property type="reaction ID" value="UER00457"/>
</dbReference>
<dbReference type="GO" id="GO:0005829">
    <property type="term" value="C:cytosol"/>
    <property type="evidence" value="ECO:0007669"/>
    <property type="project" value="TreeGrafter"/>
</dbReference>
<dbReference type="GO" id="GO:0004516">
    <property type="term" value="F:nicotinate phosphoribosyltransferase activity"/>
    <property type="evidence" value="ECO:0007669"/>
    <property type="project" value="UniProtKB-UniRule"/>
</dbReference>
<dbReference type="GO" id="GO:0034355">
    <property type="term" value="P:NAD biosynthetic process via the salvage pathway"/>
    <property type="evidence" value="ECO:0007669"/>
    <property type="project" value="TreeGrafter"/>
</dbReference>
<dbReference type="CDD" id="cd01401">
    <property type="entry name" value="PncB_like"/>
    <property type="match status" value="1"/>
</dbReference>
<dbReference type="FunFam" id="3.20.140.10:FF:000001">
    <property type="entry name" value="Nicotinate phosphoribosyltransferase"/>
    <property type="match status" value="1"/>
</dbReference>
<dbReference type="Gene3D" id="3.20.140.10">
    <property type="entry name" value="nicotinate phosphoribosyltransferase"/>
    <property type="match status" value="1"/>
</dbReference>
<dbReference type="HAMAP" id="MF_00570">
    <property type="entry name" value="NAPRTase"/>
    <property type="match status" value="1"/>
</dbReference>
<dbReference type="InterPro" id="IPR041525">
    <property type="entry name" value="N/Namide_PRibTrfase"/>
</dbReference>
<dbReference type="InterPro" id="IPR040727">
    <property type="entry name" value="NAPRTase_N"/>
</dbReference>
<dbReference type="InterPro" id="IPR006406">
    <property type="entry name" value="Nic_PRibTrfase"/>
</dbReference>
<dbReference type="InterPro" id="IPR007229">
    <property type="entry name" value="Nic_PRibTrfase-Fam"/>
</dbReference>
<dbReference type="InterPro" id="IPR036068">
    <property type="entry name" value="Nicotinate_pribotase-like_C"/>
</dbReference>
<dbReference type="NCBIfam" id="TIGR01514">
    <property type="entry name" value="NAPRTase"/>
    <property type="match status" value="1"/>
</dbReference>
<dbReference type="NCBIfam" id="NF003704">
    <property type="entry name" value="PRK05321.1"/>
    <property type="match status" value="1"/>
</dbReference>
<dbReference type="PANTHER" id="PTHR11098">
    <property type="entry name" value="NICOTINATE PHOSPHORIBOSYLTRANSFERASE"/>
    <property type="match status" value="1"/>
</dbReference>
<dbReference type="PANTHER" id="PTHR11098:SF1">
    <property type="entry name" value="NICOTINATE PHOSPHORIBOSYLTRANSFERASE"/>
    <property type="match status" value="1"/>
</dbReference>
<dbReference type="Pfam" id="PF04095">
    <property type="entry name" value="NAPRTase"/>
    <property type="match status" value="1"/>
</dbReference>
<dbReference type="Pfam" id="PF17767">
    <property type="entry name" value="NAPRTase_N"/>
    <property type="match status" value="1"/>
</dbReference>
<dbReference type="PIRSF" id="PIRSF000484">
    <property type="entry name" value="NAPRT"/>
    <property type="match status" value="1"/>
</dbReference>
<dbReference type="SUPFAM" id="SSF51690">
    <property type="entry name" value="Nicotinate/Quinolinate PRTase C-terminal domain-like"/>
    <property type="match status" value="1"/>
</dbReference>
<dbReference type="SUPFAM" id="SSF54675">
    <property type="entry name" value="Nicotinate/Quinolinate PRTase N-terminal domain-like"/>
    <property type="match status" value="1"/>
</dbReference>
<proteinExistence type="inferred from homology"/>
<sequence>MSESIFAERIVQNLLDTDFYKLTMMQAVLHNYPNAEVEWEFRCRSSEDLTPYLAEIRYQIERLSELSITADQLAFLERIPFIKPDFIRFLSLFRFNLRYVHTGIEDGQLSIRLRGPWLHVILFEVPLLAIVSEVRNRYRYREVLLEQAAERLYQKLDWLRAEASEDELAGFQLADFGTRRRFSYRVQEQAVHILKRDFPGRFVGTSNVHLAREFDLKPIGTMAHEWLMAHQQLGPRLIDSQIAALDCWVREYRGQLGIALTDCITMDAFLADFDLYFAKLFDGLRHDSGDPLEWAEKAIAHYEKLGIDPLSKTLVFSDGLDLPKSLRLYRALSGRIHVSFGVGTNLTCDIPGVEPMNIVIKMIACNGQPVAKISDTPGKTQCRDENFVSYLKHVFRVTQ</sequence>
<comment type="function">
    <text evidence="1">Catalyzes the synthesis of beta-nicotinate D-ribonucleotide from nicotinate and 5-phospho-D-ribose 1-phosphate at the expense of ATP.</text>
</comment>
<comment type="catalytic activity">
    <reaction evidence="1">
        <text>nicotinate + 5-phospho-alpha-D-ribose 1-diphosphate + ATP + H2O = nicotinate beta-D-ribonucleotide + ADP + phosphate + diphosphate</text>
        <dbReference type="Rhea" id="RHEA:36163"/>
        <dbReference type="ChEBI" id="CHEBI:15377"/>
        <dbReference type="ChEBI" id="CHEBI:30616"/>
        <dbReference type="ChEBI" id="CHEBI:32544"/>
        <dbReference type="ChEBI" id="CHEBI:33019"/>
        <dbReference type="ChEBI" id="CHEBI:43474"/>
        <dbReference type="ChEBI" id="CHEBI:57502"/>
        <dbReference type="ChEBI" id="CHEBI:58017"/>
        <dbReference type="ChEBI" id="CHEBI:456216"/>
        <dbReference type="EC" id="6.3.4.21"/>
    </reaction>
</comment>
<comment type="pathway">
    <text evidence="1">Cofactor biosynthesis; NAD(+) biosynthesis; nicotinate D-ribonucleotide from nicotinate: step 1/1.</text>
</comment>
<comment type="PTM">
    <text evidence="1">Transiently phosphorylated on a His residue during the reaction cycle. Phosphorylation strongly increases the affinity for substrates and increases the rate of nicotinate D-ribonucleotide production. Dephosphorylation regenerates the low-affinity form of the enzyme, leading to product release.</text>
</comment>
<comment type="similarity">
    <text evidence="1">Belongs to the NAPRTase family.</text>
</comment>
<gene>
    <name evidence="1" type="primary">pncB</name>
    <name type="ordered locus">Pmen_1411</name>
</gene>